<keyword id="KW-0028">Amino-acid biosynthesis</keyword>
<keyword id="KW-0963">Cytoplasm</keyword>
<keyword id="KW-0554">One-carbon metabolism</keyword>
<keyword id="KW-0663">Pyridoxal phosphate</keyword>
<keyword id="KW-0808">Transferase</keyword>
<protein>
    <recommendedName>
        <fullName evidence="1">Serine hydroxymethyltransferase</fullName>
        <shortName evidence="1">SHMT</shortName>
        <shortName evidence="1">Serine methylase</shortName>
        <ecNumber evidence="1">2.1.2.1</ecNumber>
    </recommendedName>
</protein>
<feature type="chain" id="PRO_1000091515" description="Serine hydroxymethyltransferase">
    <location>
        <begin position="1"/>
        <end position="417"/>
    </location>
</feature>
<feature type="binding site" evidence="1">
    <location>
        <position position="120"/>
    </location>
    <ligand>
        <name>(6S)-5,6,7,8-tetrahydrofolate</name>
        <dbReference type="ChEBI" id="CHEBI:57453"/>
    </ligand>
</feature>
<feature type="binding site" evidence="1">
    <location>
        <begin position="124"/>
        <end position="126"/>
    </location>
    <ligand>
        <name>(6S)-5,6,7,8-tetrahydrofolate</name>
        <dbReference type="ChEBI" id="CHEBI:57453"/>
    </ligand>
</feature>
<feature type="site" description="Plays an important role in substrate specificity" evidence="1">
    <location>
        <position position="228"/>
    </location>
</feature>
<feature type="modified residue" description="N6-(pyridoxal phosphate)lysine" evidence="1">
    <location>
        <position position="229"/>
    </location>
</feature>
<reference key="1">
    <citation type="submission" date="2008-08" db="EMBL/GenBank/DDBJ databases">
        <title>Complete sequence of Anaeromyxobacter sp. K.</title>
        <authorList>
            <consortium name="US DOE Joint Genome Institute"/>
            <person name="Lucas S."/>
            <person name="Copeland A."/>
            <person name="Lapidus A."/>
            <person name="Glavina del Rio T."/>
            <person name="Dalin E."/>
            <person name="Tice H."/>
            <person name="Bruce D."/>
            <person name="Goodwin L."/>
            <person name="Pitluck S."/>
            <person name="Saunders E."/>
            <person name="Brettin T."/>
            <person name="Detter J.C."/>
            <person name="Han C."/>
            <person name="Larimer F."/>
            <person name="Land M."/>
            <person name="Hauser L."/>
            <person name="Kyrpides N."/>
            <person name="Ovchinnikiva G."/>
            <person name="Beliaev A."/>
        </authorList>
    </citation>
    <scope>NUCLEOTIDE SEQUENCE [LARGE SCALE GENOMIC DNA]</scope>
    <source>
        <strain>K</strain>
    </source>
</reference>
<accession>B4UIM7</accession>
<evidence type="ECO:0000255" key="1">
    <source>
        <dbReference type="HAMAP-Rule" id="MF_00051"/>
    </source>
</evidence>
<proteinExistence type="inferred from homology"/>
<gene>
    <name evidence="1" type="primary">glyA</name>
    <name type="ordered locus">AnaeK_2836</name>
</gene>
<organism>
    <name type="scientific">Anaeromyxobacter sp. (strain K)</name>
    <dbReference type="NCBI Taxonomy" id="447217"/>
    <lineage>
        <taxon>Bacteria</taxon>
        <taxon>Pseudomonadati</taxon>
        <taxon>Myxococcota</taxon>
        <taxon>Myxococcia</taxon>
        <taxon>Myxococcales</taxon>
        <taxon>Cystobacterineae</taxon>
        <taxon>Anaeromyxobacteraceae</taxon>
        <taxon>Anaeromyxobacter</taxon>
    </lineage>
</organism>
<comment type="function">
    <text evidence="1">Catalyzes the reversible interconversion of serine and glycine with tetrahydrofolate (THF) serving as the one-carbon carrier. This reaction serves as the major source of one-carbon groups required for the biosynthesis of purines, thymidylate, methionine, and other important biomolecules. Also exhibits THF-independent aldolase activity toward beta-hydroxyamino acids, producing glycine and aldehydes, via a retro-aldol mechanism.</text>
</comment>
<comment type="catalytic activity">
    <reaction evidence="1">
        <text>(6R)-5,10-methylene-5,6,7,8-tetrahydrofolate + glycine + H2O = (6S)-5,6,7,8-tetrahydrofolate + L-serine</text>
        <dbReference type="Rhea" id="RHEA:15481"/>
        <dbReference type="ChEBI" id="CHEBI:15377"/>
        <dbReference type="ChEBI" id="CHEBI:15636"/>
        <dbReference type="ChEBI" id="CHEBI:33384"/>
        <dbReference type="ChEBI" id="CHEBI:57305"/>
        <dbReference type="ChEBI" id="CHEBI:57453"/>
        <dbReference type="EC" id="2.1.2.1"/>
    </reaction>
</comment>
<comment type="cofactor">
    <cofactor evidence="1">
        <name>pyridoxal 5'-phosphate</name>
        <dbReference type="ChEBI" id="CHEBI:597326"/>
    </cofactor>
</comment>
<comment type="pathway">
    <text evidence="1">One-carbon metabolism; tetrahydrofolate interconversion.</text>
</comment>
<comment type="pathway">
    <text evidence="1">Amino-acid biosynthesis; glycine biosynthesis; glycine from L-serine: step 1/1.</text>
</comment>
<comment type="subunit">
    <text evidence="1">Homodimer.</text>
</comment>
<comment type="subcellular location">
    <subcellularLocation>
        <location evidence="1">Cytoplasm</location>
    </subcellularLocation>
</comment>
<comment type="similarity">
    <text evidence="1">Belongs to the SHMT family.</text>
</comment>
<name>GLYA_ANASK</name>
<sequence length="417" mass="45045">MMPTQRLAEADPQIAKLIREETRRQAEGLELIASENFVSPAVLEALGSTLTNKYAEGYPGKRYYGGCEVVDQVEQLAIDRAKQLFGADHANVQPHAGSQANMAAYFALAKPGDTVLAMSLNFGGHLTHGSPVNFSGKLFKIVPYGLRQSDETIDMDEVARLAREHRPRILMVGASAYSRTLHFDRFAEIANEVGAAMVVDMAHIAGLVAAGLHPSPVPHSEIVTTTTHKTLRGPRGGMILCREAHAKTLNSQIFPGIQGGPLEHVIAAKAVAFGEALRPEFKAYQRRIVENAQVLAEGLKSAGLRLVSGGTDNHLMLVDLRPKKLTGKIAEEALGRAGITVNKNMIPWDPEKPMTTSGIRVGTPALTTRGMGSREMTLVAALIGRVLDAPADEQVLARVRGEVKDLCAHFPMYADRV</sequence>
<dbReference type="EC" id="2.1.2.1" evidence="1"/>
<dbReference type="EMBL" id="CP001131">
    <property type="protein sequence ID" value="ACG74060.1"/>
    <property type="molecule type" value="Genomic_DNA"/>
</dbReference>
<dbReference type="RefSeq" id="WP_012526839.1">
    <property type="nucleotide sequence ID" value="NC_011145.1"/>
</dbReference>
<dbReference type="SMR" id="B4UIM7"/>
<dbReference type="KEGG" id="ank:AnaeK_2836"/>
<dbReference type="HOGENOM" id="CLU_022477_2_1_7"/>
<dbReference type="OrthoDB" id="9803846at2"/>
<dbReference type="UniPathway" id="UPA00193"/>
<dbReference type="UniPathway" id="UPA00288">
    <property type="reaction ID" value="UER01023"/>
</dbReference>
<dbReference type="Proteomes" id="UP000001871">
    <property type="component" value="Chromosome"/>
</dbReference>
<dbReference type="GO" id="GO:0005829">
    <property type="term" value="C:cytosol"/>
    <property type="evidence" value="ECO:0007669"/>
    <property type="project" value="TreeGrafter"/>
</dbReference>
<dbReference type="GO" id="GO:0004372">
    <property type="term" value="F:glycine hydroxymethyltransferase activity"/>
    <property type="evidence" value="ECO:0007669"/>
    <property type="project" value="UniProtKB-UniRule"/>
</dbReference>
<dbReference type="GO" id="GO:0030170">
    <property type="term" value="F:pyridoxal phosphate binding"/>
    <property type="evidence" value="ECO:0007669"/>
    <property type="project" value="UniProtKB-UniRule"/>
</dbReference>
<dbReference type="GO" id="GO:0019264">
    <property type="term" value="P:glycine biosynthetic process from serine"/>
    <property type="evidence" value="ECO:0007669"/>
    <property type="project" value="UniProtKB-UniRule"/>
</dbReference>
<dbReference type="GO" id="GO:0035999">
    <property type="term" value="P:tetrahydrofolate interconversion"/>
    <property type="evidence" value="ECO:0007669"/>
    <property type="project" value="UniProtKB-UniRule"/>
</dbReference>
<dbReference type="CDD" id="cd00378">
    <property type="entry name" value="SHMT"/>
    <property type="match status" value="1"/>
</dbReference>
<dbReference type="FunFam" id="3.40.640.10:FF:000001">
    <property type="entry name" value="Serine hydroxymethyltransferase"/>
    <property type="match status" value="1"/>
</dbReference>
<dbReference type="FunFam" id="3.90.1150.10:FF:000003">
    <property type="entry name" value="Serine hydroxymethyltransferase"/>
    <property type="match status" value="1"/>
</dbReference>
<dbReference type="Gene3D" id="3.90.1150.10">
    <property type="entry name" value="Aspartate Aminotransferase, domain 1"/>
    <property type="match status" value="1"/>
</dbReference>
<dbReference type="Gene3D" id="3.40.640.10">
    <property type="entry name" value="Type I PLP-dependent aspartate aminotransferase-like (Major domain)"/>
    <property type="match status" value="1"/>
</dbReference>
<dbReference type="HAMAP" id="MF_00051">
    <property type="entry name" value="SHMT"/>
    <property type="match status" value="1"/>
</dbReference>
<dbReference type="InterPro" id="IPR015424">
    <property type="entry name" value="PyrdxlP-dep_Trfase"/>
</dbReference>
<dbReference type="InterPro" id="IPR015421">
    <property type="entry name" value="PyrdxlP-dep_Trfase_major"/>
</dbReference>
<dbReference type="InterPro" id="IPR015422">
    <property type="entry name" value="PyrdxlP-dep_Trfase_small"/>
</dbReference>
<dbReference type="InterPro" id="IPR001085">
    <property type="entry name" value="Ser_HO-MeTrfase"/>
</dbReference>
<dbReference type="InterPro" id="IPR049943">
    <property type="entry name" value="Ser_HO-MeTrfase-like"/>
</dbReference>
<dbReference type="InterPro" id="IPR019798">
    <property type="entry name" value="Ser_HO-MeTrfase_PLP_BS"/>
</dbReference>
<dbReference type="InterPro" id="IPR039429">
    <property type="entry name" value="SHMT-like_dom"/>
</dbReference>
<dbReference type="NCBIfam" id="NF000586">
    <property type="entry name" value="PRK00011.1"/>
    <property type="match status" value="1"/>
</dbReference>
<dbReference type="PANTHER" id="PTHR11680">
    <property type="entry name" value="SERINE HYDROXYMETHYLTRANSFERASE"/>
    <property type="match status" value="1"/>
</dbReference>
<dbReference type="PANTHER" id="PTHR11680:SF50">
    <property type="entry name" value="SERINE HYDROXYMETHYLTRANSFERASE"/>
    <property type="match status" value="1"/>
</dbReference>
<dbReference type="Pfam" id="PF00464">
    <property type="entry name" value="SHMT"/>
    <property type="match status" value="1"/>
</dbReference>
<dbReference type="PIRSF" id="PIRSF000412">
    <property type="entry name" value="SHMT"/>
    <property type="match status" value="1"/>
</dbReference>
<dbReference type="SUPFAM" id="SSF53383">
    <property type="entry name" value="PLP-dependent transferases"/>
    <property type="match status" value="1"/>
</dbReference>
<dbReference type="PROSITE" id="PS00096">
    <property type="entry name" value="SHMT"/>
    <property type="match status" value="1"/>
</dbReference>